<dbReference type="EMBL" id="AC064853">
    <property type="status" value="NOT_ANNOTATED_CDS"/>
    <property type="molecule type" value="Genomic_DNA"/>
</dbReference>
<dbReference type="CCDS" id="CCDS92954.1"/>
<dbReference type="RefSeq" id="NP_001382333.1">
    <property type="nucleotide sequence ID" value="NM_001395404.1"/>
</dbReference>
<dbReference type="BioMuta" id="ENSG00000284704"/>
<dbReference type="MassIVE" id="A0A286YF60"/>
<dbReference type="PeptideAtlas" id="A0A286YF60"/>
<dbReference type="Ensembl" id="ENST00000642029.1">
    <property type="protein sequence ID" value="ENSP00000493170.1"/>
    <property type="gene ID" value="ENSG00000284704.1"/>
</dbReference>
<dbReference type="GeneID" id="112441429"/>
<dbReference type="MANE-Select" id="ENST00000642029.1">
    <property type="protein sequence ID" value="ENSP00000493170.1"/>
    <property type="RefSeq nucleotide sequence ID" value="NM_001395404.1"/>
    <property type="RefSeq protein sequence ID" value="NP_001382333.1"/>
</dbReference>
<dbReference type="AGR" id="HGNC:34222"/>
<dbReference type="GeneCards" id="SCYGR3"/>
<dbReference type="HGNC" id="HGNC:34222">
    <property type="gene designation" value="SCYGR3"/>
</dbReference>
<dbReference type="HPA" id="ENSG00000284704">
    <property type="expression patterns" value="Not detected"/>
</dbReference>
<dbReference type="neXtProt" id="NX_A0A286YF60"/>
<dbReference type="VEuPathDB" id="HostDB:ENSG00000284704"/>
<dbReference type="GeneTree" id="ENSGT00950000183380"/>
<dbReference type="InParanoid" id="A0A286YF60"/>
<dbReference type="OMA" id="STVCHIG"/>
<dbReference type="PAN-GO" id="A0A286YF60">
    <property type="GO annotations" value="0 GO annotations based on evolutionary models"/>
</dbReference>
<dbReference type="Pharos" id="A0A286YF60">
    <property type="development level" value="Tdark"/>
</dbReference>
<dbReference type="PRO" id="PR:A0A286YF60"/>
<dbReference type="Proteomes" id="UP000005640">
    <property type="component" value="Chromosome 2"/>
</dbReference>
<dbReference type="Bgee" id="ENSG00000284704">
    <property type="expression patterns" value="Expressed in skin of abdomen and 23 other cell types or tissues"/>
</dbReference>
<dbReference type="GO" id="GO:0005882">
    <property type="term" value="C:intermediate filament"/>
    <property type="evidence" value="ECO:0007669"/>
    <property type="project" value="UniProtKB-KW"/>
</dbReference>
<feature type="chain" id="PRO_0000445143" description="Small cysteine and glycine repeat-containing protein 3">
    <location>
        <begin position="1"/>
        <end position="100"/>
    </location>
</feature>
<feature type="region of interest" description="13 X 2 AA repeats of CG" evidence="2">
    <location>
        <begin position="4"/>
        <end position="82"/>
    </location>
</feature>
<name>SCGR3_HUMAN</name>
<accession>A0A286YF60</accession>
<reference key="1">
    <citation type="journal article" date="2005" name="Nature">
        <title>Generation and annotation of the DNA sequences of human chromosomes 2 and 4.</title>
        <authorList>
            <person name="Hillier L.W."/>
            <person name="Graves T.A."/>
            <person name="Fulton R.S."/>
            <person name="Fulton L.A."/>
            <person name="Pepin K.H."/>
            <person name="Minx P."/>
            <person name="Wagner-McPherson C."/>
            <person name="Layman D."/>
            <person name="Wylie K."/>
            <person name="Sekhon M."/>
            <person name="Becker M.C."/>
            <person name="Fewell G.A."/>
            <person name="Delehaunty K.D."/>
            <person name="Miner T.L."/>
            <person name="Nash W.E."/>
            <person name="Kremitzki C."/>
            <person name="Oddy L."/>
            <person name="Du H."/>
            <person name="Sun H."/>
            <person name="Bradshaw-Cordum H."/>
            <person name="Ali J."/>
            <person name="Carter J."/>
            <person name="Cordes M."/>
            <person name="Harris A."/>
            <person name="Isak A."/>
            <person name="van Brunt A."/>
            <person name="Nguyen C."/>
            <person name="Du F."/>
            <person name="Courtney L."/>
            <person name="Kalicki J."/>
            <person name="Ozersky P."/>
            <person name="Abbott S."/>
            <person name="Armstrong J."/>
            <person name="Belter E.A."/>
            <person name="Caruso L."/>
            <person name="Cedroni M."/>
            <person name="Cotton M."/>
            <person name="Davidson T."/>
            <person name="Desai A."/>
            <person name="Elliott G."/>
            <person name="Erb T."/>
            <person name="Fronick C."/>
            <person name="Gaige T."/>
            <person name="Haakenson W."/>
            <person name="Haglund K."/>
            <person name="Holmes A."/>
            <person name="Harkins R."/>
            <person name="Kim K."/>
            <person name="Kruchowski S.S."/>
            <person name="Strong C.M."/>
            <person name="Grewal N."/>
            <person name="Goyea E."/>
            <person name="Hou S."/>
            <person name="Levy A."/>
            <person name="Martinka S."/>
            <person name="Mead K."/>
            <person name="McLellan M.D."/>
            <person name="Meyer R."/>
            <person name="Randall-Maher J."/>
            <person name="Tomlinson C."/>
            <person name="Dauphin-Kohlberg S."/>
            <person name="Kozlowicz-Reilly A."/>
            <person name="Shah N."/>
            <person name="Swearengen-Shahid S."/>
            <person name="Snider J."/>
            <person name="Strong J.T."/>
            <person name="Thompson J."/>
            <person name="Yoakum M."/>
            <person name="Leonard S."/>
            <person name="Pearman C."/>
            <person name="Trani L."/>
            <person name="Radionenko M."/>
            <person name="Waligorski J.E."/>
            <person name="Wang C."/>
            <person name="Rock S.M."/>
            <person name="Tin-Wollam A.-M."/>
            <person name="Maupin R."/>
            <person name="Latreille P."/>
            <person name="Wendl M.C."/>
            <person name="Yang S.-P."/>
            <person name="Pohl C."/>
            <person name="Wallis J.W."/>
            <person name="Spieth J."/>
            <person name="Bieri T.A."/>
            <person name="Berkowicz N."/>
            <person name="Nelson J.O."/>
            <person name="Osborne J."/>
            <person name="Ding L."/>
            <person name="Meyer R."/>
            <person name="Sabo A."/>
            <person name="Shotland Y."/>
            <person name="Sinha P."/>
            <person name="Wohldmann P.E."/>
            <person name="Cook L.L."/>
            <person name="Hickenbotham M.T."/>
            <person name="Eldred J."/>
            <person name="Williams D."/>
            <person name="Jones T.A."/>
            <person name="She X."/>
            <person name="Ciccarelli F.D."/>
            <person name="Izaurralde E."/>
            <person name="Taylor J."/>
            <person name="Schmutz J."/>
            <person name="Myers R.M."/>
            <person name="Cox D.R."/>
            <person name="Huang X."/>
            <person name="McPherson J.D."/>
            <person name="Mardis E.R."/>
            <person name="Clifton S.W."/>
            <person name="Warren W.C."/>
            <person name="Chinwalla A.T."/>
            <person name="Eddy S.R."/>
            <person name="Marra M.A."/>
            <person name="Ovcharenko I."/>
            <person name="Furey T.S."/>
            <person name="Miller W."/>
            <person name="Eichler E.E."/>
            <person name="Bork P."/>
            <person name="Suyama M."/>
            <person name="Torrents D."/>
            <person name="Waterston R.H."/>
            <person name="Wilson R.K."/>
        </authorList>
    </citation>
    <scope>NUCLEOTIDE SEQUENCE [LARGE SCALE GENOMIC DNA]</scope>
</reference>
<reference key="2">
    <citation type="journal article" date="2008" name="BMC Evol. Biol.">
        <title>Molecular evolution of the keratin associated protein gene family in mammals, role in the evolution of mammalian hair.</title>
        <authorList>
            <person name="Wu D.D."/>
            <person name="Irwin D.M."/>
            <person name="Zhang Y.P."/>
        </authorList>
    </citation>
    <scope>FAMILY CHARACTERIZATION</scope>
</reference>
<comment type="function">
    <text evidence="2">In the hair cortex, hair keratin intermediate filaments are embedded in an interfilamentous matrix, consisting of hair keratin-associated proteins (KRTAP), which are essential for the formation of a rigid and resistant hair shaft through their extensive disulfide bond cross-linking with abundant cysteine residues of hair keratins. The matrix proteins include the high-sulfur and high-glycine-tyrosine keratins.</text>
</comment>
<comment type="miscellaneous">
    <text evidence="1">Human have a similar number of genes as other primates despite the relative hairlessness of humans.</text>
</comment>
<comment type="similarity">
    <text evidence="3">Belongs to the KRTAP type 28 family.</text>
</comment>
<keyword id="KW-0416">Keratin</keyword>
<keyword id="KW-1185">Reference proteome</keyword>
<keyword id="KW-0677">Repeat</keyword>
<sequence length="100" mass="9511">MGCCGCGSCGGCGGGCGGCGGGCGGGCGGGCGGVCGSCTTCRCYRVGCCSSCCPCCRGCCGGCCSTPVICCCRRTCRSCGCGCRKGCCQQKCCCQKQCCC</sequence>
<protein>
    <recommendedName>
        <fullName evidence="2">Small cysteine and glycine repeat-containing protein 3</fullName>
    </recommendedName>
    <alternativeName>
        <fullName evidence="1">Keratin-associated protein 28-3</fullName>
    </alternativeName>
</protein>
<organism>
    <name type="scientific">Homo sapiens</name>
    <name type="common">Human</name>
    <dbReference type="NCBI Taxonomy" id="9606"/>
    <lineage>
        <taxon>Eukaryota</taxon>
        <taxon>Metazoa</taxon>
        <taxon>Chordata</taxon>
        <taxon>Craniata</taxon>
        <taxon>Vertebrata</taxon>
        <taxon>Euteleostomi</taxon>
        <taxon>Mammalia</taxon>
        <taxon>Eutheria</taxon>
        <taxon>Euarchontoglires</taxon>
        <taxon>Primates</taxon>
        <taxon>Haplorrhini</taxon>
        <taxon>Catarrhini</taxon>
        <taxon>Hominidae</taxon>
        <taxon>Homo</taxon>
    </lineage>
</organism>
<evidence type="ECO:0000303" key="1">
    <source>
    </source>
</evidence>
<evidence type="ECO:0000305" key="2"/>
<evidence type="ECO:0000305" key="3">
    <source>
    </source>
</evidence>
<evidence type="ECO:0000312" key="4">
    <source>
        <dbReference type="HGNC" id="HGNC:34222"/>
    </source>
</evidence>
<gene>
    <name evidence="4" type="primary">SCYGR3</name>
    <name evidence="1" type="synonym">KRTAP28-3</name>
</gene>
<proteinExistence type="evidence at protein level"/>